<keyword id="KW-1003">Cell membrane</keyword>
<keyword id="KW-0186">Copper</keyword>
<keyword id="KW-0187">Copper transport</keyword>
<keyword id="KW-0406">Ion transport</keyword>
<keyword id="KW-0472">Membrane</keyword>
<keyword id="KW-1185">Reference proteome</keyword>
<keyword id="KW-0812">Transmembrane</keyword>
<keyword id="KW-1133">Transmembrane helix</keyword>
<keyword id="KW-0813">Transport</keyword>
<evidence type="ECO:0000250" key="1"/>
<evidence type="ECO:0000255" key="2"/>
<evidence type="ECO:0000269" key="3">
    <source>
    </source>
</evidence>
<evidence type="ECO:0000305" key="4"/>
<comment type="function">
    <text evidence="3">Acts to efflux copper or a copper complex. It is possible that YfmO could contribute to copper resistance.</text>
</comment>
<comment type="subcellular location">
    <subcellularLocation>
        <location evidence="1">Cell membrane</location>
        <topology evidence="1">Multi-pass membrane protein</topology>
    </subcellularLocation>
</comment>
<comment type="induction">
    <text>Repressed by YfmP.</text>
</comment>
<comment type="miscellaneous">
    <text>Cotranscribed with yfmP.</text>
</comment>
<comment type="similarity">
    <text evidence="4">Belongs to the major facilitator superfamily.</text>
</comment>
<feature type="chain" id="PRO_0000084883" description="Multidrug efflux protein YfmO">
    <location>
        <begin position="1"/>
        <end position="396"/>
    </location>
</feature>
<feature type="transmembrane region" description="Helical" evidence="2">
    <location>
        <begin position="20"/>
        <end position="40"/>
    </location>
</feature>
<feature type="transmembrane region" description="Helical" evidence="2">
    <location>
        <begin position="56"/>
        <end position="76"/>
    </location>
</feature>
<feature type="transmembrane region" description="Helical" evidence="2">
    <location>
        <begin position="80"/>
        <end position="100"/>
    </location>
</feature>
<feature type="transmembrane region" description="Helical" evidence="2">
    <location>
        <begin position="114"/>
        <end position="134"/>
    </location>
</feature>
<feature type="transmembrane region" description="Helical" evidence="2">
    <location>
        <begin position="142"/>
        <end position="162"/>
    </location>
</feature>
<feature type="transmembrane region" description="Helical" evidence="2">
    <location>
        <begin position="171"/>
        <end position="191"/>
    </location>
</feature>
<feature type="transmembrane region" description="Helical" evidence="2">
    <location>
        <begin position="214"/>
        <end position="234"/>
    </location>
</feature>
<feature type="transmembrane region" description="Helical" evidence="2">
    <location>
        <begin position="249"/>
        <end position="269"/>
    </location>
</feature>
<feature type="transmembrane region" description="Helical" evidence="2">
    <location>
        <begin position="278"/>
        <end position="298"/>
    </location>
</feature>
<feature type="transmembrane region" description="Helical" evidence="2">
    <location>
        <begin position="301"/>
        <end position="321"/>
    </location>
</feature>
<feature type="transmembrane region" description="Helical" evidence="2">
    <location>
        <begin position="339"/>
        <end position="359"/>
    </location>
</feature>
<feature type="transmembrane region" description="Helical" evidence="2">
    <location>
        <begin position="364"/>
        <end position="384"/>
    </location>
</feature>
<sequence length="396" mass="41451">MDKTTQVNQKTGLLSQPKAVWAVAFACVISFMGIGLVDPILPAIAAQLHASPSEVSLLFTSYLLVTGFMMFFSGAISSRIGAKWTLILGLIFIIVFAGLGGSSSSIAQLVGYRGGWGLGNALFISTALAVIVGVSVGGSAQAIILYEAALGLGISVGPLAGGELGSISWRAPFFGVSVLMFIALIAISFMLPKLPKPAKRVGVFDAMKALKYKGLLTMAVSAFLYNFGFFILLAYSPFVLDLDEHGLGYVFFGWGLLLAITSVFTAPLVHKALGTVRSLVVLFIAFAAILVIMGIWTDHQTLIITCIVVAGAVLGMVNTIMTTAVMGSAPVERSIASSAYSSVRFIGGALAPWIAGMLSEHFTASTPYTVGGIVVFVGMLVLLMGRKHLAGIKAGH</sequence>
<accession>O06473</accession>
<proteinExistence type="evidence at transcript level"/>
<gene>
    <name type="primary">yfmO</name>
    <name type="ordered locus">BSU07400</name>
</gene>
<dbReference type="EMBL" id="D86418">
    <property type="protein sequence ID" value="BAA20104.1"/>
    <property type="molecule type" value="Genomic_DNA"/>
</dbReference>
<dbReference type="EMBL" id="AL009126">
    <property type="protein sequence ID" value="CAB12559.1"/>
    <property type="molecule type" value="Genomic_DNA"/>
</dbReference>
<dbReference type="PIR" id="F69813">
    <property type="entry name" value="F69813"/>
</dbReference>
<dbReference type="RefSeq" id="WP_003233759.1">
    <property type="nucleotide sequence ID" value="NZ_OZ025638.1"/>
</dbReference>
<dbReference type="SMR" id="O06473"/>
<dbReference type="FunCoup" id="O06473">
    <property type="interactions" value="126"/>
</dbReference>
<dbReference type="STRING" id="224308.BSU07400"/>
<dbReference type="TCDB" id="2.A.1.32.3">
    <property type="family name" value="the major facilitator superfamily (mfs)"/>
</dbReference>
<dbReference type="PaxDb" id="224308-BSU07400"/>
<dbReference type="EnsemblBacteria" id="CAB12559">
    <property type="protein sequence ID" value="CAB12559"/>
    <property type="gene ID" value="BSU_07400"/>
</dbReference>
<dbReference type="GeneID" id="936111"/>
<dbReference type="KEGG" id="bsu:BSU07400"/>
<dbReference type="PATRIC" id="fig|224308.179.peg.802"/>
<dbReference type="eggNOG" id="COG2814">
    <property type="taxonomic scope" value="Bacteria"/>
</dbReference>
<dbReference type="InParanoid" id="O06473"/>
<dbReference type="OrthoDB" id="66811at2"/>
<dbReference type="PhylomeDB" id="O06473"/>
<dbReference type="BioCyc" id="BSUB:BSU07400-MONOMER"/>
<dbReference type="Proteomes" id="UP000001570">
    <property type="component" value="Chromosome"/>
</dbReference>
<dbReference type="GO" id="GO:0005886">
    <property type="term" value="C:plasma membrane"/>
    <property type="evidence" value="ECO:0007669"/>
    <property type="project" value="UniProtKB-SubCell"/>
</dbReference>
<dbReference type="GO" id="GO:0022857">
    <property type="term" value="F:transmembrane transporter activity"/>
    <property type="evidence" value="ECO:0007669"/>
    <property type="project" value="InterPro"/>
</dbReference>
<dbReference type="GO" id="GO:0006825">
    <property type="term" value="P:copper ion transport"/>
    <property type="evidence" value="ECO:0007669"/>
    <property type="project" value="UniProtKB-KW"/>
</dbReference>
<dbReference type="CDD" id="cd17474">
    <property type="entry name" value="MFS_YfmO_like"/>
    <property type="match status" value="1"/>
</dbReference>
<dbReference type="Gene3D" id="1.20.1250.20">
    <property type="entry name" value="MFS general substrate transporter like domains"/>
    <property type="match status" value="1"/>
</dbReference>
<dbReference type="InterPro" id="IPR053200">
    <property type="entry name" value="Copper_Efflux_MFS"/>
</dbReference>
<dbReference type="InterPro" id="IPR011701">
    <property type="entry name" value="MFS"/>
</dbReference>
<dbReference type="InterPro" id="IPR020846">
    <property type="entry name" value="MFS_dom"/>
</dbReference>
<dbReference type="InterPro" id="IPR036259">
    <property type="entry name" value="MFS_trans_sf"/>
</dbReference>
<dbReference type="InterPro" id="IPR001958">
    <property type="entry name" value="Tet-R_TetA/multi-R_MdtG-like"/>
</dbReference>
<dbReference type="PANTHER" id="PTHR43683">
    <property type="entry name" value="MULTIDRUG EFFLUX PROTEIN YFMO"/>
    <property type="match status" value="1"/>
</dbReference>
<dbReference type="PANTHER" id="PTHR43683:SF1">
    <property type="entry name" value="MULTIDRUG EFFLUX PROTEIN YFMO"/>
    <property type="match status" value="1"/>
</dbReference>
<dbReference type="Pfam" id="PF07690">
    <property type="entry name" value="MFS_1"/>
    <property type="match status" value="1"/>
</dbReference>
<dbReference type="PRINTS" id="PR01035">
    <property type="entry name" value="TCRTETA"/>
</dbReference>
<dbReference type="SUPFAM" id="SSF103473">
    <property type="entry name" value="MFS general substrate transporter"/>
    <property type="match status" value="1"/>
</dbReference>
<dbReference type="PROSITE" id="PS50850">
    <property type="entry name" value="MFS"/>
    <property type="match status" value="1"/>
</dbReference>
<name>YFMO_BACSU</name>
<protein>
    <recommendedName>
        <fullName>Multidrug efflux protein YfmO</fullName>
    </recommendedName>
</protein>
<reference key="1">
    <citation type="journal article" date="1997" name="Microbiology">
        <title>A 23.4 kb segment at the 69 degrees-70 degrees region of the Bacillus subtilis genome.</title>
        <authorList>
            <person name="Yamamoto H."/>
            <person name="Uchiyama S."/>
            <person name="Nugroho F.A."/>
            <person name="Sekiguchi J."/>
        </authorList>
    </citation>
    <scope>NUCLEOTIDE SEQUENCE [GENOMIC DNA]</scope>
    <source>
        <strain>168 / AC327</strain>
    </source>
</reference>
<reference key="2">
    <citation type="journal article" date="1997" name="Nature">
        <title>The complete genome sequence of the Gram-positive bacterium Bacillus subtilis.</title>
        <authorList>
            <person name="Kunst F."/>
            <person name="Ogasawara N."/>
            <person name="Moszer I."/>
            <person name="Albertini A.M."/>
            <person name="Alloni G."/>
            <person name="Azevedo V."/>
            <person name="Bertero M.G."/>
            <person name="Bessieres P."/>
            <person name="Bolotin A."/>
            <person name="Borchert S."/>
            <person name="Borriss R."/>
            <person name="Boursier L."/>
            <person name="Brans A."/>
            <person name="Braun M."/>
            <person name="Brignell S.C."/>
            <person name="Bron S."/>
            <person name="Brouillet S."/>
            <person name="Bruschi C.V."/>
            <person name="Caldwell B."/>
            <person name="Capuano V."/>
            <person name="Carter N.M."/>
            <person name="Choi S.-K."/>
            <person name="Codani J.-J."/>
            <person name="Connerton I.F."/>
            <person name="Cummings N.J."/>
            <person name="Daniel R.A."/>
            <person name="Denizot F."/>
            <person name="Devine K.M."/>
            <person name="Duesterhoeft A."/>
            <person name="Ehrlich S.D."/>
            <person name="Emmerson P.T."/>
            <person name="Entian K.-D."/>
            <person name="Errington J."/>
            <person name="Fabret C."/>
            <person name="Ferrari E."/>
            <person name="Foulger D."/>
            <person name="Fritz C."/>
            <person name="Fujita M."/>
            <person name="Fujita Y."/>
            <person name="Fuma S."/>
            <person name="Galizzi A."/>
            <person name="Galleron N."/>
            <person name="Ghim S.-Y."/>
            <person name="Glaser P."/>
            <person name="Goffeau A."/>
            <person name="Golightly E.J."/>
            <person name="Grandi G."/>
            <person name="Guiseppi G."/>
            <person name="Guy B.J."/>
            <person name="Haga K."/>
            <person name="Haiech J."/>
            <person name="Harwood C.R."/>
            <person name="Henaut A."/>
            <person name="Hilbert H."/>
            <person name="Holsappel S."/>
            <person name="Hosono S."/>
            <person name="Hullo M.-F."/>
            <person name="Itaya M."/>
            <person name="Jones L.-M."/>
            <person name="Joris B."/>
            <person name="Karamata D."/>
            <person name="Kasahara Y."/>
            <person name="Klaerr-Blanchard M."/>
            <person name="Klein C."/>
            <person name="Kobayashi Y."/>
            <person name="Koetter P."/>
            <person name="Koningstein G."/>
            <person name="Krogh S."/>
            <person name="Kumano M."/>
            <person name="Kurita K."/>
            <person name="Lapidus A."/>
            <person name="Lardinois S."/>
            <person name="Lauber J."/>
            <person name="Lazarevic V."/>
            <person name="Lee S.-M."/>
            <person name="Levine A."/>
            <person name="Liu H."/>
            <person name="Masuda S."/>
            <person name="Mauel C."/>
            <person name="Medigue C."/>
            <person name="Medina N."/>
            <person name="Mellado R.P."/>
            <person name="Mizuno M."/>
            <person name="Moestl D."/>
            <person name="Nakai S."/>
            <person name="Noback M."/>
            <person name="Noone D."/>
            <person name="O'Reilly M."/>
            <person name="Ogawa K."/>
            <person name="Ogiwara A."/>
            <person name="Oudega B."/>
            <person name="Park S.-H."/>
            <person name="Parro V."/>
            <person name="Pohl T.M."/>
            <person name="Portetelle D."/>
            <person name="Porwollik S."/>
            <person name="Prescott A.M."/>
            <person name="Presecan E."/>
            <person name="Pujic P."/>
            <person name="Purnelle B."/>
            <person name="Rapoport G."/>
            <person name="Rey M."/>
            <person name="Reynolds S."/>
            <person name="Rieger M."/>
            <person name="Rivolta C."/>
            <person name="Rocha E."/>
            <person name="Roche B."/>
            <person name="Rose M."/>
            <person name="Sadaie Y."/>
            <person name="Sato T."/>
            <person name="Scanlan E."/>
            <person name="Schleich S."/>
            <person name="Schroeter R."/>
            <person name="Scoffone F."/>
            <person name="Sekiguchi J."/>
            <person name="Sekowska A."/>
            <person name="Seror S.J."/>
            <person name="Serror P."/>
            <person name="Shin B.-S."/>
            <person name="Soldo B."/>
            <person name="Sorokin A."/>
            <person name="Tacconi E."/>
            <person name="Takagi T."/>
            <person name="Takahashi H."/>
            <person name="Takemaru K."/>
            <person name="Takeuchi M."/>
            <person name="Tamakoshi A."/>
            <person name="Tanaka T."/>
            <person name="Terpstra P."/>
            <person name="Tognoni A."/>
            <person name="Tosato V."/>
            <person name="Uchiyama S."/>
            <person name="Vandenbol M."/>
            <person name="Vannier F."/>
            <person name="Vassarotti A."/>
            <person name="Viari A."/>
            <person name="Wambutt R."/>
            <person name="Wedler E."/>
            <person name="Wedler H."/>
            <person name="Weitzenegger T."/>
            <person name="Winters P."/>
            <person name="Wipat A."/>
            <person name="Yamamoto H."/>
            <person name="Yamane K."/>
            <person name="Yasumoto K."/>
            <person name="Yata K."/>
            <person name="Yoshida K."/>
            <person name="Yoshikawa H.-F."/>
            <person name="Zumstein E."/>
            <person name="Yoshikawa H."/>
            <person name="Danchin A."/>
        </authorList>
    </citation>
    <scope>NUCLEOTIDE SEQUENCE [LARGE SCALE GENOMIC DNA]</scope>
    <source>
        <strain>168</strain>
    </source>
</reference>
<reference key="3">
    <citation type="journal article" date="2003" name="Microbiology">
        <title>Two MerR homologues that affect copper induction of the Bacillus subtilis copZA operon.</title>
        <authorList>
            <person name="Gaballa A."/>
            <person name="Cao M."/>
            <person name="Helmann J.D."/>
        </authorList>
    </citation>
    <scope>FUNCTION</scope>
    <source>
        <strain>168</strain>
    </source>
</reference>
<organism>
    <name type="scientific">Bacillus subtilis (strain 168)</name>
    <dbReference type="NCBI Taxonomy" id="224308"/>
    <lineage>
        <taxon>Bacteria</taxon>
        <taxon>Bacillati</taxon>
        <taxon>Bacillota</taxon>
        <taxon>Bacilli</taxon>
        <taxon>Bacillales</taxon>
        <taxon>Bacillaceae</taxon>
        <taxon>Bacillus</taxon>
    </lineage>
</organism>